<accession>B5FN34</accession>
<organism>
    <name type="scientific">Salmonella dublin (strain CT_02021853)</name>
    <dbReference type="NCBI Taxonomy" id="439851"/>
    <lineage>
        <taxon>Bacteria</taxon>
        <taxon>Pseudomonadati</taxon>
        <taxon>Pseudomonadota</taxon>
        <taxon>Gammaproteobacteria</taxon>
        <taxon>Enterobacterales</taxon>
        <taxon>Enterobacteriaceae</taxon>
        <taxon>Salmonella</taxon>
    </lineage>
</organism>
<gene>
    <name evidence="1" type="primary">atpG</name>
    <name type="ordered locus">SeD_A4256</name>
</gene>
<feature type="chain" id="PRO_1000134199" description="ATP synthase gamma chain">
    <location>
        <begin position="1"/>
        <end position="287"/>
    </location>
</feature>
<dbReference type="EMBL" id="CP001144">
    <property type="protein sequence ID" value="ACH77368.1"/>
    <property type="molecule type" value="Genomic_DNA"/>
</dbReference>
<dbReference type="RefSeq" id="WP_000896506.1">
    <property type="nucleotide sequence ID" value="NC_011205.1"/>
</dbReference>
<dbReference type="SMR" id="B5FN34"/>
<dbReference type="GeneID" id="66758155"/>
<dbReference type="KEGG" id="sed:SeD_A4256"/>
<dbReference type="HOGENOM" id="CLU_050669_0_1_6"/>
<dbReference type="Proteomes" id="UP000008322">
    <property type="component" value="Chromosome"/>
</dbReference>
<dbReference type="GO" id="GO:0005886">
    <property type="term" value="C:plasma membrane"/>
    <property type="evidence" value="ECO:0007669"/>
    <property type="project" value="UniProtKB-SubCell"/>
</dbReference>
<dbReference type="GO" id="GO:0045259">
    <property type="term" value="C:proton-transporting ATP synthase complex"/>
    <property type="evidence" value="ECO:0007669"/>
    <property type="project" value="UniProtKB-KW"/>
</dbReference>
<dbReference type="GO" id="GO:0005524">
    <property type="term" value="F:ATP binding"/>
    <property type="evidence" value="ECO:0007669"/>
    <property type="project" value="UniProtKB-UniRule"/>
</dbReference>
<dbReference type="GO" id="GO:0046933">
    <property type="term" value="F:proton-transporting ATP synthase activity, rotational mechanism"/>
    <property type="evidence" value="ECO:0007669"/>
    <property type="project" value="UniProtKB-UniRule"/>
</dbReference>
<dbReference type="GO" id="GO:0042777">
    <property type="term" value="P:proton motive force-driven plasma membrane ATP synthesis"/>
    <property type="evidence" value="ECO:0007669"/>
    <property type="project" value="UniProtKB-UniRule"/>
</dbReference>
<dbReference type="CDD" id="cd12151">
    <property type="entry name" value="F1-ATPase_gamma"/>
    <property type="match status" value="1"/>
</dbReference>
<dbReference type="FunFam" id="1.10.287.80:FF:000005">
    <property type="entry name" value="ATP synthase gamma chain"/>
    <property type="match status" value="2"/>
</dbReference>
<dbReference type="FunFam" id="3.40.1380.10:FF:000001">
    <property type="entry name" value="ATP synthase gamma chain"/>
    <property type="match status" value="1"/>
</dbReference>
<dbReference type="Gene3D" id="3.40.1380.10">
    <property type="match status" value="1"/>
</dbReference>
<dbReference type="Gene3D" id="1.10.287.80">
    <property type="entry name" value="ATP synthase, gamma subunit, helix hairpin domain"/>
    <property type="match status" value="1"/>
</dbReference>
<dbReference type="HAMAP" id="MF_00815">
    <property type="entry name" value="ATP_synth_gamma_bact"/>
    <property type="match status" value="1"/>
</dbReference>
<dbReference type="InterPro" id="IPR035968">
    <property type="entry name" value="ATP_synth_F1_ATPase_gsu"/>
</dbReference>
<dbReference type="InterPro" id="IPR000131">
    <property type="entry name" value="ATP_synth_F1_gsu"/>
</dbReference>
<dbReference type="InterPro" id="IPR023632">
    <property type="entry name" value="ATP_synth_F1_gsu_CS"/>
</dbReference>
<dbReference type="NCBIfam" id="TIGR01146">
    <property type="entry name" value="ATPsyn_F1gamma"/>
    <property type="match status" value="1"/>
</dbReference>
<dbReference type="NCBIfam" id="NF004144">
    <property type="entry name" value="PRK05621.1-1"/>
    <property type="match status" value="1"/>
</dbReference>
<dbReference type="PANTHER" id="PTHR11693">
    <property type="entry name" value="ATP SYNTHASE GAMMA CHAIN"/>
    <property type="match status" value="1"/>
</dbReference>
<dbReference type="PANTHER" id="PTHR11693:SF22">
    <property type="entry name" value="ATP SYNTHASE SUBUNIT GAMMA, MITOCHONDRIAL"/>
    <property type="match status" value="1"/>
</dbReference>
<dbReference type="Pfam" id="PF00231">
    <property type="entry name" value="ATP-synt"/>
    <property type="match status" value="1"/>
</dbReference>
<dbReference type="PRINTS" id="PR00126">
    <property type="entry name" value="ATPASEGAMMA"/>
</dbReference>
<dbReference type="SUPFAM" id="SSF52943">
    <property type="entry name" value="ATP synthase (F1-ATPase), gamma subunit"/>
    <property type="match status" value="1"/>
</dbReference>
<dbReference type="PROSITE" id="PS00153">
    <property type="entry name" value="ATPASE_GAMMA"/>
    <property type="match status" value="1"/>
</dbReference>
<protein>
    <recommendedName>
        <fullName evidence="1">ATP synthase gamma chain</fullName>
    </recommendedName>
    <alternativeName>
        <fullName evidence="1">ATP synthase F1 sector gamma subunit</fullName>
    </alternativeName>
    <alternativeName>
        <fullName evidence="1">F-ATPase gamma subunit</fullName>
    </alternativeName>
</protein>
<evidence type="ECO:0000255" key="1">
    <source>
        <dbReference type="HAMAP-Rule" id="MF_00815"/>
    </source>
</evidence>
<keyword id="KW-0066">ATP synthesis</keyword>
<keyword id="KW-0997">Cell inner membrane</keyword>
<keyword id="KW-1003">Cell membrane</keyword>
<keyword id="KW-0139">CF(1)</keyword>
<keyword id="KW-0375">Hydrogen ion transport</keyword>
<keyword id="KW-0406">Ion transport</keyword>
<keyword id="KW-0472">Membrane</keyword>
<keyword id="KW-0813">Transport</keyword>
<comment type="function">
    <text evidence="1">Produces ATP from ADP in the presence of a proton gradient across the membrane. The gamma chain is believed to be important in regulating ATPase activity and the flow of protons through the CF(0) complex.</text>
</comment>
<comment type="subunit">
    <text evidence="1">F-type ATPases have 2 components, CF(1) - the catalytic core - and CF(0) - the membrane proton channel. CF(1) has five subunits: alpha(3), beta(3), gamma(1), delta(1), epsilon(1). CF(0) has three main subunits: a, b and c.</text>
</comment>
<comment type="subcellular location">
    <subcellularLocation>
        <location evidence="1">Cell inner membrane</location>
        <topology evidence="1">Peripheral membrane protein</topology>
    </subcellularLocation>
</comment>
<comment type="similarity">
    <text evidence="1">Belongs to the ATPase gamma chain family.</text>
</comment>
<name>ATPG_SALDC</name>
<sequence>MAGAKEIRSKIASVQNTQKITKAMEMVAASKMRKSQDRMAASRPYAETMRKVIGHLANGNLEYKHPYLEERDVKRVGYLVVSTDRGLCGGLNINLFKKLLADMKAWSDKGVQCELAMIGSKGVSFFNSVGGNVVAQVTGMGDNPSLSELIGPVKVMLQAYDEGRLDKLYIVSNKFINTMSQVPTITQLLPLPASEDDDLKRKAWDYLYEPDPKALLDTLLRRYVESQVYQGVVENLASEQAARMVAMKAATDNGGSLIKELQLVYNKARQASITQELTEIVSGAAAV</sequence>
<reference key="1">
    <citation type="journal article" date="2011" name="J. Bacteriol.">
        <title>Comparative genomics of 28 Salmonella enterica isolates: evidence for CRISPR-mediated adaptive sublineage evolution.</title>
        <authorList>
            <person name="Fricke W.F."/>
            <person name="Mammel M.K."/>
            <person name="McDermott P.F."/>
            <person name="Tartera C."/>
            <person name="White D.G."/>
            <person name="Leclerc J.E."/>
            <person name="Ravel J."/>
            <person name="Cebula T.A."/>
        </authorList>
    </citation>
    <scope>NUCLEOTIDE SEQUENCE [LARGE SCALE GENOMIC DNA]</scope>
    <source>
        <strain>CT_02021853</strain>
    </source>
</reference>
<proteinExistence type="inferred from homology"/>